<feature type="chain" id="PRO_0000283355" description="Putative F-box protein At1g70380">
    <location>
        <begin position="1"/>
        <end position="377"/>
    </location>
</feature>
<feature type="domain" description="F-box">
    <location>
        <begin position="3"/>
        <end position="48"/>
    </location>
</feature>
<protein>
    <recommendedName>
        <fullName>Putative F-box protein At1g70380</fullName>
    </recommendedName>
</protein>
<proteinExistence type="predicted"/>
<keyword id="KW-1185">Reference proteome</keyword>
<reference key="1">
    <citation type="journal article" date="2000" name="Nature">
        <title>Sequence and analysis of chromosome 1 of the plant Arabidopsis thaliana.</title>
        <authorList>
            <person name="Theologis A."/>
            <person name="Ecker J.R."/>
            <person name="Palm C.J."/>
            <person name="Federspiel N.A."/>
            <person name="Kaul S."/>
            <person name="White O."/>
            <person name="Alonso J."/>
            <person name="Altafi H."/>
            <person name="Araujo R."/>
            <person name="Bowman C.L."/>
            <person name="Brooks S.Y."/>
            <person name="Buehler E."/>
            <person name="Chan A."/>
            <person name="Chao Q."/>
            <person name="Chen H."/>
            <person name="Cheuk R.F."/>
            <person name="Chin C.W."/>
            <person name="Chung M.K."/>
            <person name="Conn L."/>
            <person name="Conway A.B."/>
            <person name="Conway A.R."/>
            <person name="Creasy T.H."/>
            <person name="Dewar K."/>
            <person name="Dunn P."/>
            <person name="Etgu P."/>
            <person name="Feldblyum T.V."/>
            <person name="Feng J.-D."/>
            <person name="Fong B."/>
            <person name="Fujii C.Y."/>
            <person name="Gill J.E."/>
            <person name="Goldsmith A.D."/>
            <person name="Haas B."/>
            <person name="Hansen N.F."/>
            <person name="Hughes B."/>
            <person name="Huizar L."/>
            <person name="Hunter J.L."/>
            <person name="Jenkins J."/>
            <person name="Johnson-Hopson C."/>
            <person name="Khan S."/>
            <person name="Khaykin E."/>
            <person name="Kim C.J."/>
            <person name="Koo H.L."/>
            <person name="Kremenetskaia I."/>
            <person name="Kurtz D.B."/>
            <person name="Kwan A."/>
            <person name="Lam B."/>
            <person name="Langin-Hooper S."/>
            <person name="Lee A."/>
            <person name="Lee J.M."/>
            <person name="Lenz C.A."/>
            <person name="Li J.H."/>
            <person name="Li Y.-P."/>
            <person name="Lin X."/>
            <person name="Liu S.X."/>
            <person name="Liu Z.A."/>
            <person name="Luros J.S."/>
            <person name="Maiti R."/>
            <person name="Marziali A."/>
            <person name="Militscher J."/>
            <person name="Miranda M."/>
            <person name="Nguyen M."/>
            <person name="Nierman W.C."/>
            <person name="Osborne B.I."/>
            <person name="Pai G."/>
            <person name="Peterson J."/>
            <person name="Pham P.K."/>
            <person name="Rizzo M."/>
            <person name="Rooney T."/>
            <person name="Rowley D."/>
            <person name="Sakano H."/>
            <person name="Salzberg S.L."/>
            <person name="Schwartz J.R."/>
            <person name="Shinn P."/>
            <person name="Southwick A.M."/>
            <person name="Sun H."/>
            <person name="Tallon L.J."/>
            <person name="Tambunga G."/>
            <person name="Toriumi M.J."/>
            <person name="Town C.D."/>
            <person name="Utterback T."/>
            <person name="Van Aken S."/>
            <person name="Vaysberg M."/>
            <person name="Vysotskaia V.S."/>
            <person name="Walker M."/>
            <person name="Wu D."/>
            <person name="Yu G."/>
            <person name="Fraser C.M."/>
            <person name="Venter J.C."/>
            <person name="Davis R.W."/>
        </authorList>
    </citation>
    <scope>NUCLEOTIDE SEQUENCE [LARGE SCALE GENOMIC DNA]</scope>
    <source>
        <strain>cv. Columbia</strain>
    </source>
</reference>
<reference key="2">
    <citation type="journal article" date="2017" name="Plant J.">
        <title>Araport11: a complete reannotation of the Arabidopsis thaliana reference genome.</title>
        <authorList>
            <person name="Cheng C.Y."/>
            <person name="Krishnakumar V."/>
            <person name="Chan A.P."/>
            <person name="Thibaud-Nissen F."/>
            <person name="Schobel S."/>
            <person name="Town C.D."/>
        </authorList>
    </citation>
    <scope>GENOME REANNOTATION</scope>
    <source>
        <strain>cv. Columbia</strain>
    </source>
</reference>
<gene>
    <name type="ordered locus">At1g70380</name>
    <name type="ORF">F17O7.8</name>
</gene>
<name>FB82_ARATH</name>
<organism>
    <name type="scientific">Arabidopsis thaliana</name>
    <name type="common">Mouse-ear cress</name>
    <dbReference type="NCBI Taxonomy" id="3702"/>
    <lineage>
        <taxon>Eukaryota</taxon>
        <taxon>Viridiplantae</taxon>
        <taxon>Streptophyta</taxon>
        <taxon>Embryophyta</taxon>
        <taxon>Tracheophyta</taxon>
        <taxon>Spermatophyta</taxon>
        <taxon>Magnoliopsida</taxon>
        <taxon>eudicotyledons</taxon>
        <taxon>Gunneridae</taxon>
        <taxon>Pentapetalae</taxon>
        <taxon>rosids</taxon>
        <taxon>malvids</taxon>
        <taxon>Brassicales</taxon>
        <taxon>Brassicaceae</taxon>
        <taxon>Camelineae</taxon>
        <taxon>Arabidopsis</taxon>
    </lineage>
</organism>
<dbReference type="EMBL" id="AC003671">
    <property type="protein sequence ID" value="AAC18802.1"/>
    <property type="molecule type" value="Genomic_DNA"/>
</dbReference>
<dbReference type="EMBL" id="CP002684">
    <property type="protein sequence ID" value="AEE35052.1"/>
    <property type="molecule type" value="Genomic_DNA"/>
</dbReference>
<dbReference type="PIR" id="T01484">
    <property type="entry name" value="T01484"/>
</dbReference>
<dbReference type="RefSeq" id="NP_177195.1">
    <property type="nucleotide sequence ID" value="NM_105706.1"/>
</dbReference>
<dbReference type="STRING" id="3702.O64598"/>
<dbReference type="iPTMnet" id="O64598"/>
<dbReference type="PaxDb" id="3702-AT1G70380.1"/>
<dbReference type="EnsemblPlants" id="AT1G70380.1">
    <property type="protein sequence ID" value="AT1G70380.1"/>
    <property type="gene ID" value="AT1G70380"/>
</dbReference>
<dbReference type="GeneID" id="843374"/>
<dbReference type="Gramene" id="AT1G70380.1">
    <property type="protein sequence ID" value="AT1G70380.1"/>
    <property type="gene ID" value="AT1G70380"/>
</dbReference>
<dbReference type="KEGG" id="ath:AT1G70380"/>
<dbReference type="Araport" id="AT1G70380"/>
<dbReference type="TAIR" id="AT1G70380"/>
<dbReference type="HOGENOM" id="CLU_027176_8_1_1"/>
<dbReference type="InParanoid" id="O64598"/>
<dbReference type="OMA" id="FTRETCF"/>
<dbReference type="PhylomeDB" id="O64598"/>
<dbReference type="PRO" id="PR:O64598"/>
<dbReference type="Proteomes" id="UP000006548">
    <property type="component" value="Chromosome 1"/>
</dbReference>
<dbReference type="ExpressionAtlas" id="O64598">
    <property type="expression patterns" value="baseline and differential"/>
</dbReference>
<dbReference type="Gene3D" id="1.20.1280.50">
    <property type="match status" value="1"/>
</dbReference>
<dbReference type="InterPro" id="IPR013187">
    <property type="entry name" value="F-box-assoc_dom_typ3"/>
</dbReference>
<dbReference type="InterPro" id="IPR017451">
    <property type="entry name" value="F-box-assoc_interact_dom"/>
</dbReference>
<dbReference type="InterPro" id="IPR036047">
    <property type="entry name" value="F-box-like_dom_sf"/>
</dbReference>
<dbReference type="InterPro" id="IPR001810">
    <property type="entry name" value="F-box_dom"/>
</dbReference>
<dbReference type="NCBIfam" id="TIGR01640">
    <property type="entry name" value="F_box_assoc_1"/>
    <property type="match status" value="1"/>
</dbReference>
<dbReference type="PANTHER" id="PTHR31111">
    <property type="entry name" value="BNAA05G37150D PROTEIN-RELATED"/>
    <property type="match status" value="1"/>
</dbReference>
<dbReference type="PANTHER" id="PTHR31111:SF138">
    <property type="entry name" value="F-BOX ASSOCIATED DOMAIN-CONTAINING PROTEIN"/>
    <property type="match status" value="1"/>
</dbReference>
<dbReference type="Pfam" id="PF00646">
    <property type="entry name" value="F-box"/>
    <property type="match status" value="1"/>
</dbReference>
<dbReference type="Pfam" id="PF08268">
    <property type="entry name" value="FBA_3"/>
    <property type="match status" value="1"/>
</dbReference>
<dbReference type="SMART" id="SM00256">
    <property type="entry name" value="FBOX"/>
    <property type="match status" value="1"/>
</dbReference>
<dbReference type="SUPFAM" id="SSF81383">
    <property type="entry name" value="F-box domain"/>
    <property type="match status" value="1"/>
</dbReference>
<accession>O64598</accession>
<sequence length="377" mass="43907">MVNTSFETLALDMQIEILARLPLKYLMRCMCVSKKWASLIRGEDFRSAYLLRSMARPRLLFVASRSRKFTRETCFHSVYQEPPLLLSGKRQMLTDNHIAPVFTVSNPILGLLCHQGYNNEIVICNPGLKKFRNLPQIQVPEGASVRSFFGYDKVDKVFKVLCVCVPQTQFGAGWTSKEPKKYQVYTVRSDHEKPSFWRPIICNDDHSVVTDEGLFNGGFLYYGARSSCNKPMVMRFNVSSEAFAVIKLPEEVDIDYHWRLVNYKGKVALVNTFDSKFKFNGVFEIWVRNEVDRKWDKDIIKIPQWTESVDNYNVYFKGTTGTKELVFAPPNWFGEPLFVLYYDKATTNLRRFDIEGMDDQHYSFHTFLDHVDSTWLM</sequence>